<gene>
    <name evidence="14" type="primary">DHAR1</name>
    <name type="synonym">DHAR5</name>
    <name type="ordered locus">At1g19570</name>
    <name type="ORF">F14P1.9</name>
    <name type="ORF">F18O14.22</name>
</gene>
<proteinExistence type="evidence at protein level"/>
<sequence length="213" mass="23641">MALEICVKAAVGAPDHLGDCPFSQRALLTLEEKSLTYKIHLINLSDKPQWFLDISPQGKVPVLKIDDKWVTDSDVIVGILEEKYPDPPLKTPAEFASVGSNIFGTFGTFLKSKDSNDGSEHALLVELEALENHLKSHDGPFIAGERVSAVDLSLAPKLYHLQVALGHFKSWSVPESFPHVHNYMKTLFSLDSFEKTKTEEKYVISGWAPKVNP</sequence>
<name>DHAR1_ARATH</name>
<keyword id="KW-0002">3D-structure</keyword>
<keyword id="KW-0025">Alternative splicing</keyword>
<keyword id="KW-0963">Cytoplasm</keyword>
<keyword id="KW-0216">Detoxification</keyword>
<keyword id="KW-0903">Direct protein sequencing</keyword>
<keyword id="KW-0318">Glutathionylation</keyword>
<keyword id="KW-0407">Ion channel</keyword>
<keyword id="KW-0406">Ion transport</keyword>
<keyword id="KW-0472">Membrane</keyword>
<keyword id="KW-0496">Mitochondrion</keyword>
<keyword id="KW-0560">Oxidoreductase</keyword>
<keyword id="KW-0576">Peroxisome</keyword>
<keyword id="KW-0611">Plant defense</keyword>
<keyword id="KW-1185">Reference proteome</keyword>
<keyword id="KW-0346">Stress response</keyword>
<keyword id="KW-0808">Transferase</keyword>
<keyword id="KW-0813">Transport</keyword>
<keyword id="KW-0851">Voltage-gated channel</keyword>
<evidence type="ECO:0000250" key="1"/>
<evidence type="ECO:0000250" key="2">
    <source>
        <dbReference type="UniProtKB" id="Q65XA0"/>
    </source>
</evidence>
<evidence type="ECO:0000255" key="3"/>
<evidence type="ECO:0000269" key="4">
    <source>
    </source>
</evidence>
<evidence type="ECO:0000269" key="5">
    <source>
    </source>
</evidence>
<evidence type="ECO:0000269" key="6">
    <source>
    </source>
</evidence>
<evidence type="ECO:0000269" key="7">
    <source>
    </source>
</evidence>
<evidence type="ECO:0000269" key="8">
    <source>
    </source>
</evidence>
<evidence type="ECO:0000269" key="9">
    <source>
    </source>
</evidence>
<evidence type="ECO:0000269" key="10">
    <source>
    </source>
</evidence>
<evidence type="ECO:0000269" key="11">
    <source>
    </source>
</evidence>
<evidence type="ECO:0000269" key="12">
    <source>
    </source>
</evidence>
<evidence type="ECO:0000269" key="13">
    <source ref="15"/>
</evidence>
<evidence type="ECO:0000303" key="14">
    <source>
    </source>
</evidence>
<evidence type="ECO:0000305" key="15"/>
<evidence type="ECO:0007744" key="16">
    <source>
        <dbReference type="PDB" id="5ELG"/>
    </source>
</evidence>
<evidence type="ECO:0007829" key="17">
    <source>
        <dbReference type="PDB" id="5EL8"/>
    </source>
</evidence>
<evidence type="ECO:0007829" key="18">
    <source>
        <dbReference type="PDB" id="5ELG"/>
    </source>
</evidence>
<accession>Q9FWR4</accession>
<accession>A8MRM5</accession>
<accession>Q9LN37</accession>
<dbReference type="EC" id="2.5.1.18" evidence="4"/>
<dbReference type="EC" id="1.8.5.1" evidence="4"/>
<dbReference type="EMBL" id="AC024609">
    <property type="protein sequence ID" value="AAF98403.1"/>
    <property type="molecule type" value="Genomic_DNA"/>
</dbReference>
<dbReference type="EMBL" id="AC025808">
    <property type="protein sequence ID" value="AAF79440.1"/>
    <property type="status" value="ALT_SEQ"/>
    <property type="molecule type" value="Genomic_DNA"/>
</dbReference>
<dbReference type="EMBL" id="CP002684">
    <property type="protein sequence ID" value="AEE29868.1"/>
    <property type="molecule type" value="Genomic_DNA"/>
</dbReference>
<dbReference type="EMBL" id="AY039590">
    <property type="protein sequence ID" value="AAK62645.1"/>
    <property type="molecule type" value="mRNA"/>
</dbReference>
<dbReference type="EMBL" id="AY052211">
    <property type="protein sequence ID" value="AAK97681.1"/>
    <property type="molecule type" value="mRNA"/>
</dbReference>
<dbReference type="EMBL" id="AY055790">
    <property type="protein sequence ID" value="AAL06957.1"/>
    <property type="molecule type" value="mRNA"/>
</dbReference>
<dbReference type="EMBL" id="AY085426">
    <property type="protein sequence ID" value="AAM62653.1"/>
    <property type="molecule type" value="mRNA"/>
</dbReference>
<dbReference type="EMBL" id="AK117865">
    <property type="protein sequence ID" value="BAC42506.1"/>
    <property type="molecule type" value="mRNA"/>
</dbReference>
<dbReference type="PIR" id="D86328">
    <property type="entry name" value="D86328"/>
</dbReference>
<dbReference type="RefSeq" id="NP_173387.1">
    <molecule id="Q9FWR4-1"/>
    <property type="nucleotide sequence ID" value="NM_101814.5"/>
</dbReference>
<dbReference type="PDB" id="5EL8">
    <property type="method" value="X-ray"/>
    <property type="resolution" value="2.30 A"/>
    <property type="chains" value="A=1-213"/>
</dbReference>
<dbReference type="PDB" id="5ELA">
    <property type="method" value="X-ray"/>
    <property type="resolution" value="2.28 A"/>
    <property type="chains" value="A=1-213"/>
</dbReference>
<dbReference type="PDB" id="5ELG">
    <property type="method" value="X-ray"/>
    <property type="resolution" value="1.81 A"/>
    <property type="chains" value="A=1-213"/>
</dbReference>
<dbReference type="PDBsum" id="5EL8"/>
<dbReference type="PDBsum" id="5ELA"/>
<dbReference type="PDBsum" id="5ELG"/>
<dbReference type="SMR" id="Q9FWR4"/>
<dbReference type="BioGRID" id="23783">
    <property type="interactions" value="49"/>
</dbReference>
<dbReference type="FunCoup" id="Q9FWR4">
    <property type="interactions" value="548"/>
</dbReference>
<dbReference type="IntAct" id="Q9FWR4">
    <property type="interactions" value="48"/>
</dbReference>
<dbReference type="STRING" id="3702.Q9FWR4"/>
<dbReference type="TCDB" id="1.A.12.2.1">
    <property type="family name" value="the intracellular chloride channel (clic) family"/>
</dbReference>
<dbReference type="PaxDb" id="3702-AT1G19570.1"/>
<dbReference type="ProteomicsDB" id="222016">
    <molecule id="Q9FWR4-1"/>
</dbReference>
<dbReference type="EnsemblPlants" id="AT1G19570.1">
    <molecule id="Q9FWR4-1"/>
    <property type="protein sequence ID" value="AT1G19570.1"/>
    <property type="gene ID" value="AT1G19570"/>
</dbReference>
<dbReference type="GeneID" id="838544"/>
<dbReference type="Gramene" id="AT1G19570.1">
    <molecule id="Q9FWR4-1"/>
    <property type="protein sequence ID" value="AT1G19570.1"/>
    <property type="gene ID" value="AT1G19570"/>
</dbReference>
<dbReference type="KEGG" id="ath:AT1G19570"/>
<dbReference type="Araport" id="AT1G19570"/>
<dbReference type="TAIR" id="AT1G19570">
    <property type="gene designation" value="DHAR1"/>
</dbReference>
<dbReference type="eggNOG" id="KOG1422">
    <property type="taxonomic scope" value="Eukaryota"/>
</dbReference>
<dbReference type="HOGENOM" id="CLU_011226_1_0_1"/>
<dbReference type="InParanoid" id="Q9FWR4"/>
<dbReference type="OMA" id="KWFLDIN"/>
<dbReference type="OrthoDB" id="1935530at2759"/>
<dbReference type="PhylomeDB" id="Q9FWR4"/>
<dbReference type="BioCyc" id="ARA:AT1G19570-MONOMER"/>
<dbReference type="BRENDA" id="1.8.5.1">
    <property type="organism ID" value="399"/>
</dbReference>
<dbReference type="SABIO-RK" id="Q9FWR4"/>
<dbReference type="CD-CODE" id="4299E36E">
    <property type="entry name" value="Nucleolus"/>
</dbReference>
<dbReference type="PRO" id="PR:Q9FWR4"/>
<dbReference type="Proteomes" id="UP000006548">
    <property type="component" value="Chromosome 1"/>
</dbReference>
<dbReference type="ExpressionAtlas" id="Q9FWR4">
    <property type="expression patterns" value="baseline and differential"/>
</dbReference>
<dbReference type="GO" id="GO:0048046">
    <property type="term" value="C:apoplast"/>
    <property type="evidence" value="ECO:0007005"/>
    <property type="project" value="TAIR"/>
</dbReference>
<dbReference type="GO" id="GO:0009507">
    <property type="term" value="C:chloroplast"/>
    <property type="evidence" value="ECO:0007005"/>
    <property type="project" value="TAIR"/>
</dbReference>
<dbReference type="GO" id="GO:0009570">
    <property type="term" value="C:chloroplast stroma"/>
    <property type="evidence" value="ECO:0007005"/>
    <property type="project" value="TAIR"/>
</dbReference>
<dbReference type="GO" id="GO:0005829">
    <property type="term" value="C:cytosol"/>
    <property type="evidence" value="ECO:0000314"/>
    <property type="project" value="TAIR"/>
</dbReference>
<dbReference type="GO" id="GO:0005739">
    <property type="term" value="C:mitochondrion"/>
    <property type="evidence" value="ECO:0000314"/>
    <property type="project" value="TAIR"/>
</dbReference>
<dbReference type="GO" id="GO:0034702">
    <property type="term" value="C:monoatomic ion channel complex"/>
    <property type="evidence" value="ECO:0007669"/>
    <property type="project" value="UniProtKB-KW"/>
</dbReference>
<dbReference type="GO" id="GO:0005634">
    <property type="term" value="C:nucleus"/>
    <property type="evidence" value="ECO:0007005"/>
    <property type="project" value="TAIR"/>
</dbReference>
<dbReference type="GO" id="GO:0005777">
    <property type="term" value="C:peroxisome"/>
    <property type="evidence" value="ECO:0000314"/>
    <property type="project" value="TAIR"/>
</dbReference>
<dbReference type="GO" id="GO:0000325">
    <property type="term" value="C:plant-type vacuole"/>
    <property type="evidence" value="ECO:0007005"/>
    <property type="project" value="TAIR"/>
</dbReference>
<dbReference type="GO" id="GO:0005886">
    <property type="term" value="C:plasma membrane"/>
    <property type="evidence" value="ECO:0007005"/>
    <property type="project" value="TAIR"/>
</dbReference>
<dbReference type="GO" id="GO:0005507">
    <property type="term" value="F:copper ion binding"/>
    <property type="evidence" value="ECO:0007005"/>
    <property type="project" value="TAIR"/>
</dbReference>
<dbReference type="GO" id="GO:0045174">
    <property type="term" value="F:glutathione dehydrogenase (ascorbate) activity"/>
    <property type="evidence" value="ECO:0000314"/>
    <property type="project" value="TAIR"/>
</dbReference>
<dbReference type="GO" id="GO:0004364">
    <property type="term" value="F:glutathione transferase activity"/>
    <property type="evidence" value="ECO:0007669"/>
    <property type="project" value="UniProtKB-EC"/>
</dbReference>
<dbReference type="GO" id="GO:0140547">
    <property type="term" value="P:acquisition of seed longevity"/>
    <property type="evidence" value="ECO:0000316"/>
    <property type="project" value="TAIR"/>
</dbReference>
<dbReference type="GO" id="GO:0033355">
    <property type="term" value="P:ascorbate glutathione cycle"/>
    <property type="evidence" value="ECO:0007669"/>
    <property type="project" value="InterPro"/>
</dbReference>
<dbReference type="GO" id="GO:0070301">
    <property type="term" value="P:cellular response to hydrogen peroxide"/>
    <property type="evidence" value="ECO:0000316"/>
    <property type="project" value="TAIR"/>
</dbReference>
<dbReference type="GO" id="GO:0006952">
    <property type="term" value="P:defense response"/>
    <property type="evidence" value="ECO:0007669"/>
    <property type="project" value="UniProtKB-KW"/>
</dbReference>
<dbReference type="GO" id="GO:0019852">
    <property type="term" value="P:L-ascorbic acid metabolic process"/>
    <property type="evidence" value="ECO:0000316"/>
    <property type="project" value="TAIR"/>
</dbReference>
<dbReference type="GO" id="GO:0034220">
    <property type="term" value="P:monoatomic ion transmembrane transport"/>
    <property type="evidence" value="ECO:0007669"/>
    <property type="project" value="UniProtKB-KW"/>
</dbReference>
<dbReference type="GO" id="GO:0080151">
    <property type="term" value="P:positive regulation of salicylic acid mediated signaling pathway"/>
    <property type="evidence" value="ECO:0000316"/>
    <property type="project" value="TAIR"/>
</dbReference>
<dbReference type="GO" id="GO:0010731">
    <property type="term" value="P:protein glutathionylation"/>
    <property type="evidence" value="ECO:0000314"/>
    <property type="project" value="TAIR"/>
</dbReference>
<dbReference type="GO" id="GO:0043903">
    <property type="term" value="P:regulation of biological process involved in symbiotic interaction"/>
    <property type="evidence" value="ECO:0000315"/>
    <property type="project" value="TAIR"/>
</dbReference>
<dbReference type="GO" id="GO:0009753">
    <property type="term" value="P:response to jasmonic acid"/>
    <property type="evidence" value="ECO:0000270"/>
    <property type="project" value="TAIR"/>
</dbReference>
<dbReference type="GO" id="GO:0010193">
    <property type="term" value="P:response to ozone"/>
    <property type="evidence" value="ECO:0000270"/>
    <property type="project" value="TAIR"/>
</dbReference>
<dbReference type="GO" id="GO:0009610">
    <property type="term" value="P:response to symbiotic fungus"/>
    <property type="evidence" value="ECO:0000270"/>
    <property type="project" value="TAIR"/>
</dbReference>
<dbReference type="GO" id="GO:0010043">
    <property type="term" value="P:response to zinc ion"/>
    <property type="evidence" value="ECO:0000270"/>
    <property type="project" value="TAIR"/>
</dbReference>
<dbReference type="CDD" id="cd00570">
    <property type="entry name" value="GST_N_family"/>
    <property type="match status" value="1"/>
</dbReference>
<dbReference type="FunFam" id="3.40.30.10:FF:000102">
    <property type="entry name" value="Glutathione S-transferase DHAR3 chloroplastic"/>
    <property type="match status" value="1"/>
</dbReference>
<dbReference type="FunFam" id="1.20.1050.10:FF:000029">
    <property type="entry name" value="Glutathione S-transferase DHAR3, chloroplastic"/>
    <property type="match status" value="1"/>
</dbReference>
<dbReference type="Gene3D" id="1.20.1050.10">
    <property type="match status" value="1"/>
</dbReference>
<dbReference type="Gene3D" id="3.40.30.10">
    <property type="entry name" value="Glutaredoxin"/>
    <property type="match status" value="1"/>
</dbReference>
<dbReference type="InterPro" id="IPR044627">
    <property type="entry name" value="DHAR1/2/3/4"/>
</dbReference>
<dbReference type="InterPro" id="IPR010987">
    <property type="entry name" value="Glutathione-S-Trfase_C-like"/>
</dbReference>
<dbReference type="InterPro" id="IPR036282">
    <property type="entry name" value="Glutathione-S-Trfase_C_sf"/>
</dbReference>
<dbReference type="InterPro" id="IPR040079">
    <property type="entry name" value="Glutathione_S-Trfase"/>
</dbReference>
<dbReference type="InterPro" id="IPR004045">
    <property type="entry name" value="Glutathione_S-Trfase_N"/>
</dbReference>
<dbReference type="InterPro" id="IPR036249">
    <property type="entry name" value="Thioredoxin-like_sf"/>
</dbReference>
<dbReference type="PANTHER" id="PTHR44420:SF4">
    <property type="entry name" value="F18O14.31-RELATED"/>
    <property type="match status" value="1"/>
</dbReference>
<dbReference type="PANTHER" id="PTHR44420">
    <property type="entry name" value="GLUTATHIONE S-TRANSFERASE DHAR2-RELATED"/>
    <property type="match status" value="1"/>
</dbReference>
<dbReference type="Pfam" id="PF13410">
    <property type="entry name" value="GST_C_2"/>
    <property type="match status" value="1"/>
</dbReference>
<dbReference type="Pfam" id="PF13409">
    <property type="entry name" value="GST_N_2"/>
    <property type="match status" value="1"/>
</dbReference>
<dbReference type="SFLD" id="SFLDS00019">
    <property type="entry name" value="Glutathione_Transferase_(cytos"/>
    <property type="match status" value="1"/>
</dbReference>
<dbReference type="SFLD" id="SFLDG00358">
    <property type="entry name" value="Main_(cytGST)"/>
    <property type="match status" value="1"/>
</dbReference>
<dbReference type="SUPFAM" id="SSF47616">
    <property type="entry name" value="GST C-terminal domain-like"/>
    <property type="match status" value="1"/>
</dbReference>
<dbReference type="SUPFAM" id="SSF52833">
    <property type="entry name" value="Thioredoxin-like"/>
    <property type="match status" value="1"/>
</dbReference>
<dbReference type="PROSITE" id="PS50405">
    <property type="entry name" value="GST_CTER"/>
    <property type="match status" value="1"/>
</dbReference>
<dbReference type="PROSITE" id="PS50404">
    <property type="entry name" value="GST_NTER"/>
    <property type="match status" value="1"/>
</dbReference>
<comment type="function">
    <text evidence="4 8 11">Displays a dual function. As a soluble protein, exhibits glutathione-dependent thiol transferase and dehydroascorbate (DHA) reductase activities (PubMed:12077129). Key component of the ascorbate recycling system. Involved in the redox homeostasis, especially in scavenging of ROS under oxidative stresses, subsequently to biotic or abiotic inducers (PubMed:16262714). As a peripheral membrane protein, could also function as voltage-gated ion channel (PubMed:17267397).</text>
</comment>
<comment type="catalytic activity">
    <reaction evidence="4">
        <text>RX + glutathione = an S-substituted glutathione + a halide anion + H(+)</text>
        <dbReference type="Rhea" id="RHEA:16437"/>
        <dbReference type="ChEBI" id="CHEBI:15378"/>
        <dbReference type="ChEBI" id="CHEBI:16042"/>
        <dbReference type="ChEBI" id="CHEBI:17792"/>
        <dbReference type="ChEBI" id="CHEBI:57925"/>
        <dbReference type="ChEBI" id="CHEBI:90779"/>
        <dbReference type="EC" id="2.5.1.18"/>
    </reaction>
</comment>
<comment type="catalytic activity">
    <reaction evidence="4">
        <text>L-dehydroascorbate + 2 glutathione = glutathione disulfide + L-ascorbate</text>
        <dbReference type="Rhea" id="RHEA:24424"/>
        <dbReference type="ChEBI" id="CHEBI:38290"/>
        <dbReference type="ChEBI" id="CHEBI:57925"/>
        <dbReference type="ChEBI" id="CHEBI:58297"/>
        <dbReference type="ChEBI" id="CHEBI:58539"/>
        <dbReference type="EC" id="1.8.5.1"/>
    </reaction>
</comment>
<comment type="biophysicochemical properties">
    <kinetics>
        <KM evidence="4">0.26 mM for DHA (at pH 6.5 and 30 degrees Celsius)</KM>
        <KM evidence="4">10 mM for GSH (at pH 6.5 and 30 degrees Celsius)</KM>
    </kinetics>
</comment>
<comment type="subunit">
    <text evidence="4 10">Monomer (PubMed:12077129). Interacts with copper (Cu) (PubMed:16526091).</text>
</comment>
<comment type="subcellular location">
    <subcellularLocation>
        <location evidence="5">Mitochondrion</location>
    </subcellularLocation>
    <subcellularLocation>
        <location evidence="15">Cytoplasm</location>
        <location evidence="15">Cytosol</location>
    </subcellularLocation>
    <subcellularLocation>
        <location evidence="12">Peroxisome</location>
    </subcellularLocation>
    <subcellularLocation>
        <location evidence="15">Membrane</location>
        <topology evidence="15">Peripheral membrane protein</topology>
    </subcellularLocation>
    <text>Exists both as soluble protein and as membrane protein.</text>
</comment>
<comment type="alternative products">
    <event type="alternative splicing"/>
    <isoform>
        <id>Q9FWR4-1</id>
        <name>1</name>
        <sequence type="displayed"/>
    </isoform>
    <isoform>
        <id>Q9FWR4-2</id>
        <name>2</name>
        <sequence type="described" ref="VSP_036254"/>
    </isoform>
</comment>
<comment type="tissue specificity">
    <text evidence="5">Expressed at least in roots and leaves.</text>
</comment>
<comment type="induction">
    <text evidence="5 6 8">Induced by jasmonic acid (JA), oxidative chemical stresses (e.g. norflurazon, menadione, paraquat, and antimycin A), and during photosynthetic operation in the light. Also up-regulated by insects such as Pieris rapae in a JA-dependent manner.</text>
</comment>
<comment type="domain">
    <text evidence="1">May change from a globular, soluble state to a state where the N-terminal domain is inserted into the membrane and functions as ion channel. A conformation change of the N-terminal domain is thought to expose hydrophobic surfaces that trigger membrane insertion (By similarity).</text>
</comment>
<comment type="PTM">
    <text evidence="4 7">Spontaneous S-glutathionylation in the presence of oxidized glutathione (GSSG).</text>
</comment>
<comment type="mass spectrometry" mass="24.561" method="Electrospray" evidence="7">
    <text>Reduced form.</text>
</comment>
<comment type="mass spectrometry" mass="25.319" method="Electrospray" evidence="7">
    <text>S-glutathionylated form.</text>
</comment>
<comment type="disruption phenotype">
    <text evidence="9">Plants react normally to ozone.</text>
</comment>
<comment type="similarity">
    <text evidence="15">Belongs to the GST superfamily. DHAR family.</text>
</comment>
<comment type="sequence caution" evidence="15">
    <conflict type="erroneous gene model prediction">
        <sequence resource="EMBL-CDS" id="AAF79440"/>
    </conflict>
    <text>The predicted gene At1g19570 has been split into 2 genes: At1g19565 and At1g19570.</text>
</comment>
<feature type="chain" id="PRO_0000363142" description="Glutathione S-transferase DHAR1, mitochondrial">
    <location>
        <begin position="1"/>
        <end position="213"/>
    </location>
</feature>
<feature type="domain" description="GST N-terminal">
    <location>
        <begin position="10"/>
        <end position="83"/>
    </location>
</feature>
<feature type="domain" description="GST C-terminal">
    <location>
        <begin position="84"/>
        <end position="213"/>
    </location>
</feature>
<feature type="short sequence motif" description="Glutathione-binding" evidence="3">
    <location>
        <begin position="20"/>
        <end position="25"/>
    </location>
</feature>
<feature type="short sequence motif" description="Copper-binding" evidence="3">
    <location>
        <begin position="133"/>
        <end position="137"/>
    </location>
</feature>
<feature type="active site" description="Nucleophile" evidence="2">
    <location>
        <position position="20"/>
    </location>
</feature>
<feature type="binding site" evidence="2">
    <location>
        <position position="8"/>
    </location>
    <ligand>
        <name>glutathione</name>
        <dbReference type="ChEBI" id="CHEBI:57925"/>
    </ligand>
</feature>
<feature type="binding site" evidence="2">
    <location>
        <position position="8"/>
    </location>
    <ligand>
        <name>L-ascorbate</name>
        <dbReference type="ChEBI" id="CHEBI:38290"/>
    </ligand>
</feature>
<feature type="binding site" evidence="2">
    <location>
        <position position="19"/>
    </location>
    <ligand>
        <name>glutathione</name>
        <dbReference type="ChEBI" id="CHEBI:57925"/>
    </ligand>
</feature>
<feature type="binding site" evidence="2">
    <location>
        <position position="19"/>
    </location>
    <ligand>
        <name>L-ascorbate</name>
        <dbReference type="ChEBI" id="CHEBI:38290"/>
    </ligand>
</feature>
<feature type="binding site" evidence="13 16">
    <location>
        <position position="47"/>
    </location>
    <ligand>
        <name>glutathione</name>
        <dbReference type="ChEBI" id="CHEBI:57925"/>
    </ligand>
</feature>
<feature type="binding site" evidence="13 16">
    <location>
        <position position="60"/>
    </location>
    <ligand>
        <name>glutathione</name>
        <dbReference type="ChEBI" id="CHEBI:57925"/>
    </ligand>
</feature>
<feature type="binding site" evidence="13 16">
    <location>
        <position position="73"/>
    </location>
    <ligand>
        <name>glutathione</name>
        <dbReference type="ChEBI" id="CHEBI:57925"/>
    </ligand>
</feature>
<feature type="binding site" evidence="2">
    <location>
        <position position="160"/>
    </location>
    <ligand>
        <name>glutathione</name>
        <dbReference type="ChEBI" id="CHEBI:57925"/>
    </ligand>
</feature>
<feature type="binding site" evidence="2">
    <location>
        <position position="207"/>
    </location>
    <ligand>
        <name>glutathione</name>
        <dbReference type="ChEBI" id="CHEBI:57925"/>
    </ligand>
</feature>
<feature type="binding site" evidence="2">
    <location>
        <position position="210"/>
    </location>
    <ligand>
        <name>L-ascorbate</name>
        <dbReference type="ChEBI" id="CHEBI:38290"/>
    </ligand>
</feature>
<feature type="modified residue" description="S-glutathionyl cysteine" evidence="4 7">
    <location>
        <position position="20"/>
    </location>
</feature>
<feature type="splice variant" id="VSP_036254" description="In isoform 2." evidence="15">
    <location>
        <position position="50"/>
    </location>
</feature>
<feature type="mutagenesis site" description="Reduced activity by 50 percent." evidence="4">
    <original>C</original>
    <variation>S</variation>
    <location>
        <position position="6"/>
    </location>
</feature>
<feature type="mutagenesis site" description="No activity." evidence="4">
    <original>C</original>
    <variation>S</variation>
    <location>
        <position position="20"/>
    </location>
</feature>
<feature type="strand" evidence="18">
    <location>
        <begin position="3"/>
        <end position="10"/>
    </location>
</feature>
<feature type="strand" evidence="18">
    <location>
        <begin position="13"/>
        <end position="17"/>
    </location>
</feature>
<feature type="helix" evidence="18">
    <location>
        <begin position="21"/>
        <end position="32"/>
    </location>
</feature>
<feature type="strand" evidence="18">
    <location>
        <begin position="37"/>
        <end position="42"/>
    </location>
</feature>
<feature type="strand" evidence="17">
    <location>
        <begin position="44"/>
        <end position="46"/>
    </location>
</feature>
<feature type="helix" evidence="18">
    <location>
        <begin position="49"/>
        <end position="54"/>
    </location>
</feature>
<feature type="strand" evidence="18">
    <location>
        <begin position="62"/>
        <end position="65"/>
    </location>
</feature>
<feature type="strand" evidence="18">
    <location>
        <begin position="68"/>
        <end position="71"/>
    </location>
</feature>
<feature type="helix" evidence="18">
    <location>
        <begin position="73"/>
        <end position="83"/>
    </location>
</feature>
<feature type="helix" evidence="18">
    <location>
        <begin position="93"/>
        <end position="95"/>
    </location>
</feature>
<feature type="turn" evidence="18">
    <location>
        <begin position="96"/>
        <end position="101"/>
    </location>
</feature>
<feature type="helix" evidence="18">
    <location>
        <begin position="102"/>
        <end position="110"/>
    </location>
</feature>
<feature type="strand" evidence="17">
    <location>
        <begin position="115"/>
        <end position="117"/>
    </location>
</feature>
<feature type="helix" evidence="18">
    <location>
        <begin position="119"/>
        <end position="136"/>
    </location>
</feature>
<feature type="strand" evidence="17">
    <location>
        <begin position="139"/>
        <end position="141"/>
    </location>
</feature>
<feature type="strand" evidence="18">
    <location>
        <begin position="144"/>
        <end position="146"/>
    </location>
</feature>
<feature type="helix" evidence="18">
    <location>
        <begin position="149"/>
        <end position="169"/>
    </location>
</feature>
<feature type="helix" evidence="18">
    <location>
        <begin position="178"/>
        <end position="188"/>
    </location>
</feature>
<feature type="helix" evidence="18">
    <location>
        <begin position="191"/>
        <end position="196"/>
    </location>
</feature>
<feature type="helix" evidence="18">
    <location>
        <begin position="200"/>
        <end position="207"/>
    </location>
</feature>
<feature type="turn" evidence="18">
    <location>
        <begin position="208"/>
        <end position="210"/>
    </location>
</feature>
<protein>
    <recommendedName>
        <fullName>Glutathione S-transferase DHAR1, mitochondrial</fullName>
        <ecNumber evidence="4">2.5.1.18</ecNumber>
    </recommendedName>
    <alternativeName>
        <fullName>Chloride intracellular channel homolog 1</fullName>
        <shortName>CLIC homolog 1</shortName>
    </alternativeName>
    <alternativeName>
        <fullName evidence="14">Glutathione-dependent dehydroascorbate reductase 1</fullName>
        <shortName evidence="14">AtDHAR1</shortName>
        <shortName>GSH-dependent dehydroascorbate reductase 1</shortName>
        <shortName>mtDHAR</shortName>
        <ecNumber evidence="4">1.8.5.1</ecNumber>
    </alternativeName>
</protein>
<organism>
    <name type="scientific">Arabidopsis thaliana</name>
    <name type="common">Mouse-ear cress</name>
    <dbReference type="NCBI Taxonomy" id="3702"/>
    <lineage>
        <taxon>Eukaryota</taxon>
        <taxon>Viridiplantae</taxon>
        <taxon>Streptophyta</taxon>
        <taxon>Embryophyta</taxon>
        <taxon>Tracheophyta</taxon>
        <taxon>Spermatophyta</taxon>
        <taxon>Magnoliopsida</taxon>
        <taxon>eudicotyledons</taxon>
        <taxon>Gunneridae</taxon>
        <taxon>Pentapetalae</taxon>
        <taxon>rosids</taxon>
        <taxon>malvids</taxon>
        <taxon>Brassicales</taxon>
        <taxon>Brassicaceae</taxon>
        <taxon>Camelineae</taxon>
        <taxon>Arabidopsis</taxon>
    </lineage>
</organism>
<reference key="1">
    <citation type="journal article" date="2002" name="J. Biol. Chem.">
        <title>Functional divergence in the glutathione transferase superfamily in plants. Identification of two classes with putative functions in redox homeostasis in Arabidopsis thaliana.</title>
        <authorList>
            <person name="Dixon D.P."/>
            <person name="Davis B.G."/>
            <person name="Edwards R."/>
        </authorList>
    </citation>
    <scope>NUCLEOTIDE SEQUENCE [MRNA] (ISOFORM 1)</scope>
    <scope>IDENTIFICATION BY MASS SPECTROMETRY</scope>
    <scope>FUNCTION</scope>
    <scope>MUTAGENESIS OF CYS-6 AND CYS-20</scope>
    <scope>BIOPHYSICOCHEMICAL PROPERTIES</scope>
    <scope>SUBUNIT</scope>
    <scope>GLUTATHIONYLATION AT CYS-20</scope>
    <scope>GENE FAMILY</scope>
</reference>
<reference key="2">
    <citation type="journal article" date="2000" name="Nature">
        <title>Sequence and analysis of chromosome 1 of the plant Arabidopsis thaliana.</title>
        <authorList>
            <person name="Theologis A."/>
            <person name="Ecker J.R."/>
            <person name="Palm C.J."/>
            <person name="Federspiel N.A."/>
            <person name="Kaul S."/>
            <person name="White O."/>
            <person name="Alonso J."/>
            <person name="Altafi H."/>
            <person name="Araujo R."/>
            <person name="Bowman C.L."/>
            <person name="Brooks S.Y."/>
            <person name="Buehler E."/>
            <person name="Chan A."/>
            <person name="Chao Q."/>
            <person name="Chen H."/>
            <person name="Cheuk R.F."/>
            <person name="Chin C.W."/>
            <person name="Chung M.K."/>
            <person name="Conn L."/>
            <person name="Conway A.B."/>
            <person name="Conway A.R."/>
            <person name="Creasy T.H."/>
            <person name="Dewar K."/>
            <person name="Dunn P."/>
            <person name="Etgu P."/>
            <person name="Feldblyum T.V."/>
            <person name="Feng J.-D."/>
            <person name="Fong B."/>
            <person name="Fujii C.Y."/>
            <person name="Gill J.E."/>
            <person name="Goldsmith A.D."/>
            <person name="Haas B."/>
            <person name="Hansen N.F."/>
            <person name="Hughes B."/>
            <person name="Huizar L."/>
            <person name="Hunter J.L."/>
            <person name="Jenkins J."/>
            <person name="Johnson-Hopson C."/>
            <person name="Khan S."/>
            <person name="Khaykin E."/>
            <person name="Kim C.J."/>
            <person name="Koo H.L."/>
            <person name="Kremenetskaia I."/>
            <person name="Kurtz D.B."/>
            <person name="Kwan A."/>
            <person name="Lam B."/>
            <person name="Langin-Hooper S."/>
            <person name="Lee A."/>
            <person name="Lee J.M."/>
            <person name="Lenz C.A."/>
            <person name="Li J.H."/>
            <person name="Li Y.-P."/>
            <person name="Lin X."/>
            <person name="Liu S.X."/>
            <person name="Liu Z.A."/>
            <person name="Luros J.S."/>
            <person name="Maiti R."/>
            <person name="Marziali A."/>
            <person name="Militscher J."/>
            <person name="Miranda M."/>
            <person name="Nguyen M."/>
            <person name="Nierman W.C."/>
            <person name="Osborne B.I."/>
            <person name="Pai G."/>
            <person name="Peterson J."/>
            <person name="Pham P.K."/>
            <person name="Rizzo M."/>
            <person name="Rooney T."/>
            <person name="Rowley D."/>
            <person name="Sakano H."/>
            <person name="Salzberg S.L."/>
            <person name="Schwartz J.R."/>
            <person name="Shinn P."/>
            <person name="Southwick A.M."/>
            <person name="Sun H."/>
            <person name="Tallon L.J."/>
            <person name="Tambunga G."/>
            <person name="Toriumi M.J."/>
            <person name="Town C.D."/>
            <person name="Utterback T."/>
            <person name="Van Aken S."/>
            <person name="Vaysberg M."/>
            <person name="Vysotskaia V.S."/>
            <person name="Walker M."/>
            <person name="Wu D."/>
            <person name="Yu G."/>
            <person name="Fraser C.M."/>
            <person name="Venter J.C."/>
            <person name="Davis R.W."/>
        </authorList>
    </citation>
    <scope>NUCLEOTIDE SEQUENCE [LARGE SCALE GENOMIC DNA]</scope>
    <source>
        <strain>cv. Columbia</strain>
    </source>
</reference>
<reference key="3">
    <citation type="journal article" date="2017" name="Plant J.">
        <title>Araport11: a complete reannotation of the Arabidopsis thaliana reference genome.</title>
        <authorList>
            <person name="Cheng C.Y."/>
            <person name="Krishnakumar V."/>
            <person name="Chan A.P."/>
            <person name="Thibaud-Nissen F."/>
            <person name="Schobel S."/>
            <person name="Town C.D."/>
        </authorList>
    </citation>
    <scope>GENOME REANNOTATION</scope>
    <source>
        <strain>cv. Columbia</strain>
    </source>
</reference>
<reference key="4">
    <citation type="journal article" date="2002" name="Science">
        <title>Functional annotation of a full-length Arabidopsis cDNA collection.</title>
        <authorList>
            <person name="Seki M."/>
            <person name="Narusaka M."/>
            <person name="Kamiya A."/>
            <person name="Ishida J."/>
            <person name="Satou M."/>
            <person name="Sakurai T."/>
            <person name="Nakajima M."/>
            <person name="Enju A."/>
            <person name="Akiyama K."/>
            <person name="Oono Y."/>
            <person name="Muramatsu M."/>
            <person name="Hayashizaki Y."/>
            <person name="Kawai J."/>
            <person name="Carninci P."/>
            <person name="Itoh M."/>
            <person name="Ishii Y."/>
            <person name="Arakawa T."/>
            <person name="Shibata K."/>
            <person name="Shinagawa A."/>
            <person name="Shinozaki K."/>
        </authorList>
    </citation>
    <scope>NUCLEOTIDE SEQUENCE [LARGE SCALE MRNA] (ISOFORM 1)</scope>
    <source>
        <strain>cv. Columbia</strain>
    </source>
</reference>
<reference key="5">
    <citation type="journal article" date="2003" name="Science">
        <title>Empirical analysis of transcriptional activity in the Arabidopsis genome.</title>
        <authorList>
            <person name="Yamada K."/>
            <person name="Lim J."/>
            <person name="Dale J.M."/>
            <person name="Chen H."/>
            <person name="Shinn P."/>
            <person name="Palm C.J."/>
            <person name="Southwick A.M."/>
            <person name="Wu H.C."/>
            <person name="Kim C.J."/>
            <person name="Nguyen M."/>
            <person name="Pham P.K."/>
            <person name="Cheuk R.F."/>
            <person name="Karlin-Newmann G."/>
            <person name="Liu S.X."/>
            <person name="Lam B."/>
            <person name="Sakano H."/>
            <person name="Wu T."/>
            <person name="Yu G."/>
            <person name="Miranda M."/>
            <person name="Quach H.L."/>
            <person name="Tripp M."/>
            <person name="Chang C.H."/>
            <person name="Lee J.M."/>
            <person name="Toriumi M.J."/>
            <person name="Chan M.M."/>
            <person name="Tang C.C."/>
            <person name="Onodera C.S."/>
            <person name="Deng J.M."/>
            <person name="Akiyama K."/>
            <person name="Ansari Y."/>
            <person name="Arakawa T."/>
            <person name="Banh J."/>
            <person name="Banno F."/>
            <person name="Bowser L."/>
            <person name="Brooks S.Y."/>
            <person name="Carninci P."/>
            <person name="Chao Q."/>
            <person name="Choy N."/>
            <person name="Enju A."/>
            <person name="Goldsmith A.D."/>
            <person name="Gurjal M."/>
            <person name="Hansen N.F."/>
            <person name="Hayashizaki Y."/>
            <person name="Johnson-Hopson C."/>
            <person name="Hsuan V.W."/>
            <person name="Iida K."/>
            <person name="Karnes M."/>
            <person name="Khan S."/>
            <person name="Koesema E."/>
            <person name="Ishida J."/>
            <person name="Jiang P.X."/>
            <person name="Jones T."/>
            <person name="Kawai J."/>
            <person name="Kamiya A."/>
            <person name="Meyers C."/>
            <person name="Nakajima M."/>
            <person name="Narusaka M."/>
            <person name="Seki M."/>
            <person name="Sakurai T."/>
            <person name="Satou M."/>
            <person name="Tamse R."/>
            <person name="Vaysberg M."/>
            <person name="Wallender E.K."/>
            <person name="Wong C."/>
            <person name="Yamamura Y."/>
            <person name="Yuan S."/>
            <person name="Shinozaki K."/>
            <person name="Davis R.W."/>
            <person name="Theologis A."/>
            <person name="Ecker J.R."/>
        </authorList>
    </citation>
    <scope>NUCLEOTIDE SEQUENCE [LARGE SCALE MRNA] (ISOFORM 1)</scope>
    <source>
        <strain>cv. Columbia</strain>
    </source>
</reference>
<reference key="6">
    <citation type="submission" date="2002-03" db="EMBL/GenBank/DDBJ databases">
        <title>Full-length cDNA from Arabidopsis thaliana.</title>
        <authorList>
            <person name="Brover V.V."/>
            <person name="Troukhan M.E."/>
            <person name="Alexandrov N.A."/>
            <person name="Lu Y.-P."/>
            <person name="Flavell R.B."/>
            <person name="Feldmann K.A."/>
        </authorList>
    </citation>
    <scope>NUCLEOTIDE SEQUENCE [LARGE SCALE MRNA] (ISOFORM 1)</scope>
</reference>
<reference key="7">
    <citation type="journal article" date="2003" name="J. Biol. Chem.">
        <title>Molecular definition of the ascorbate-glutathione cycle in Arabidopsis mitochondria reveals dual targeting of antioxidant defenses in plants.</title>
        <authorList>
            <person name="Chew O."/>
            <person name="Whelan J."/>
            <person name="Millar A.H."/>
        </authorList>
    </citation>
    <scope>PROTEIN SEQUENCE OF 9-25</scope>
    <scope>IDENTIFICATION BY MASS SPECTROMETRY</scope>
    <scope>TISSUE SPECIFICITY</scope>
    <scope>SUBCELLULAR LOCATION</scope>
    <scope>INDUCTION</scope>
</reference>
<reference key="8">
    <citation type="journal article" date="2004" name="Plant Cell">
        <title>A conserved transcript pattern in response to a specialist and a generalist herbivore.</title>
        <authorList>
            <person name="Reymond P."/>
            <person name="Bodenhausen N."/>
            <person name="Van Poecke R.M.P."/>
            <person name="Krishnamurthy V."/>
            <person name="Dicke M."/>
            <person name="Farmer E.E."/>
        </authorList>
    </citation>
    <scope>INDUCTION BY INSECTS</scope>
</reference>
<reference key="9">
    <citation type="journal article" date="2005" name="Plant J.">
        <title>Coordinated activation of metabolic pathways for antioxidants and defence compounds by jasmonates and their roles in stress tolerance in Arabidopsis.</title>
        <authorList>
            <person name="Sasaki-Sekimoto Y."/>
            <person name="Taki N."/>
            <person name="Obayashi T."/>
            <person name="Aono M."/>
            <person name="Matsumoto F."/>
            <person name="Sakurai N."/>
            <person name="Suzuki H."/>
            <person name="Hirai M.Y."/>
            <person name="Noji M."/>
            <person name="Saito K."/>
            <person name="Masuda T."/>
            <person name="Takamiya K."/>
            <person name="Shibata D."/>
            <person name="Ohta H."/>
        </authorList>
    </citation>
    <scope>FUNCTION</scope>
    <scope>INDUCTION BY JA</scope>
</reference>
<reference key="10">
    <citation type="journal article" date="2005" name="Plant Physiol.">
        <title>Stress-induced protein S-glutathionylation in Arabidopsis.</title>
        <authorList>
            <person name="Dixon D.P."/>
            <person name="Skipsey M."/>
            <person name="Grundy N.M."/>
            <person name="Edwards R."/>
        </authorList>
    </citation>
    <scope>MASS SPECTROMETRY</scope>
    <scope>IDENTIFICATION BY MASS SPECTROMETRY</scope>
    <scope>GLUTATHIONYLATION AT CYS-20</scope>
</reference>
<reference key="11">
    <citation type="journal article" date="2006" name="Plant Cell Physiol.">
        <title>Cytosolic dehydroascorbate reductase is important for ozone tolerance in Arabidopsis thaliana.</title>
        <authorList>
            <person name="Yoshida S."/>
            <person name="Tamaoki M."/>
            <person name="Shikano T."/>
            <person name="Nakajima N."/>
            <person name="Ogawa D."/>
            <person name="Ioki M."/>
            <person name="Aono M."/>
            <person name="Kubo A."/>
            <person name="Kamada H."/>
            <person name="Inoue Y."/>
            <person name="Saji H."/>
        </authorList>
    </citation>
    <scope>DISRUPTION PHENOTYPE</scope>
</reference>
<reference key="12">
    <citation type="journal article" date="2006" name="Proteomics">
        <title>Proteomic survey of copper-binding proteins in Arabidopsis roots by immobilized metal affinity chromatography and mass spectrometry.</title>
        <authorList>
            <person name="Kung C.-C.S."/>
            <person name="Huang W.-N."/>
            <person name="Huang Y.-C."/>
            <person name="Yeh K.-C."/>
        </authorList>
    </citation>
    <scope>IDENTIFICATION BY MASS SPECTROMETRY</scope>
    <scope>INTERACTION WITH COPPER</scope>
</reference>
<reference key="13">
    <citation type="journal article" date="2007" name="J. Biol. Chem.">
        <title>A plant homolog of animal chloride intracellular channels (CLICs) generates an ion conductance in heterologous systems.</title>
        <authorList>
            <person name="Elter A."/>
            <person name="Hartel A."/>
            <person name="Sieben C."/>
            <person name="Hertel B."/>
            <person name="Fischer-Schliebs E."/>
            <person name="Luttge U."/>
            <person name="Moroni A."/>
            <person name="Thiel G."/>
        </authorList>
    </citation>
    <scope>FUNCTION</scope>
</reference>
<reference key="14">
    <citation type="journal article" date="2009" name="Plant Physiol.">
        <title>In-depth proteome analysis of Arabidopsis leaf peroxisomes combined with in vivo subcellular targeting verification indicates novel metabolic and regulatory functions of peroxisomes.</title>
        <authorList>
            <person name="Reumann S."/>
            <person name="Quan S."/>
            <person name="Aung K."/>
            <person name="Yang P."/>
            <person name="Manandhar-Shrestha K."/>
            <person name="Holbrook D."/>
            <person name="Linka N."/>
            <person name="Switzenberg R."/>
            <person name="Wilkerson C.G."/>
            <person name="Weber A.P."/>
            <person name="Olsen L.J."/>
            <person name="Hu J."/>
        </authorList>
    </citation>
    <scope>SUBCELLULAR LOCATION</scope>
</reference>
<reference key="15">
    <citation type="submission" date="2015-11" db="PDB data bank">
        <title>Arabidopsis thaliana DHAR1 apo structure.</title>
        <authorList>
            <person name="Menault M."/>
            <person name="Roszak A.W."/>
            <person name="Lapthorn A.J."/>
        </authorList>
    </citation>
    <scope>X-RAY CRYSTALLOGRAPHY (1.81 ANGSTROMS) IN COMPLEX WITH GLUTATHIONE</scope>
</reference>